<evidence type="ECO:0000255" key="1">
    <source>
        <dbReference type="HAMAP-Rule" id="MF_00006"/>
    </source>
</evidence>
<accession>Q0K7M0</accession>
<dbReference type="EC" id="4.3.2.1" evidence="1"/>
<dbReference type="EMBL" id="AM260479">
    <property type="protein sequence ID" value="CAJ94001.1"/>
    <property type="molecule type" value="Genomic_DNA"/>
</dbReference>
<dbReference type="RefSeq" id="WP_010813837.1">
    <property type="nucleotide sequence ID" value="NZ_CP039287.1"/>
</dbReference>
<dbReference type="SMR" id="Q0K7M0"/>
<dbReference type="STRING" id="381666.H16_A2925"/>
<dbReference type="KEGG" id="reh:H16_A2925"/>
<dbReference type="eggNOG" id="COG0165">
    <property type="taxonomic scope" value="Bacteria"/>
</dbReference>
<dbReference type="HOGENOM" id="CLU_027272_2_3_4"/>
<dbReference type="OrthoDB" id="9769623at2"/>
<dbReference type="UniPathway" id="UPA00068">
    <property type="reaction ID" value="UER00114"/>
</dbReference>
<dbReference type="Proteomes" id="UP000008210">
    <property type="component" value="Chromosome 1"/>
</dbReference>
<dbReference type="GO" id="GO:0005829">
    <property type="term" value="C:cytosol"/>
    <property type="evidence" value="ECO:0007669"/>
    <property type="project" value="TreeGrafter"/>
</dbReference>
<dbReference type="GO" id="GO:0004056">
    <property type="term" value="F:argininosuccinate lyase activity"/>
    <property type="evidence" value="ECO:0007669"/>
    <property type="project" value="UniProtKB-UniRule"/>
</dbReference>
<dbReference type="GO" id="GO:0042450">
    <property type="term" value="P:arginine biosynthetic process via ornithine"/>
    <property type="evidence" value="ECO:0007669"/>
    <property type="project" value="InterPro"/>
</dbReference>
<dbReference type="GO" id="GO:0006526">
    <property type="term" value="P:L-arginine biosynthetic process"/>
    <property type="evidence" value="ECO:0007669"/>
    <property type="project" value="UniProtKB-UniRule"/>
</dbReference>
<dbReference type="CDD" id="cd01359">
    <property type="entry name" value="Argininosuccinate_lyase"/>
    <property type="match status" value="1"/>
</dbReference>
<dbReference type="FunFam" id="1.10.275.10:FF:000002">
    <property type="entry name" value="Argininosuccinate lyase"/>
    <property type="match status" value="1"/>
</dbReference>
<dbReference type="FunFam" id="1.10.40.30:FF:000001">
    <property type="entry name" value="Argininosuccinate lyase"/>
    <property type="match status" value="1"/>
</dbReference>
<dbReference type="FunFam" id="1.20.200.10:FF:000015">
    <property type="entry name" value="argininosuccinate lyase isoform X2"/>
    <property type="match status" value="1"/>
</dbReference>
<dbReference type="Gene3D" id="1.10.40.30">
    <property type="entry name" value="Fumarase/aspartase (C-terminal domain)"/>
    <property type="match status" value="1"/>
</dbReference>
<dbReference type="Gene3D" id="1.20.200.10">
    <property type="entry name" value="Fumarase/aspartase (Central domain)"/>
    <property type="match status" value="1"/>
</dbReference>
<dbReference type="Gene3D" id="1.10.275.10">
    <property type="entry name" value="Fumarase/aspartase (N-terminal domain)"/>
    <property type="match status" value="1"/>
</dbReference>
<dbReference type="HAMAP" id="MF_00006">
    <property type="entry name" value="Arg_succ_lyase"/>
    <property type="match status" value="1"/>
</dbReference>
<dbReference type="InterPro" id="IPR029419">
    <property type="entry name" value="Arg_succ_lyase_C"/>
</dbReference>
<dbReference type="InterPro" id="IPR009049">
    <property type="entry name" value="Argininosuccinate_lyase"/>
</dbReference>
<dbReference type="InterPro" id="IPR024083">
    <property type="entry name" value="Fumarase/histidase_N"/>
</dbReference>
<dbReference type="InterPro" id="IPR020557">
    <property type="entry name" value="Fumarate_lyase_CS"/>
</dbReference>
<dbReference type="InterPro" id="IPR000362">
    <property type="entry name" value="Fumarate_lyase_fam"/>
</dbReference>
<dbReference type="InterPro" id="IPR022761">
    <property type="entry name" value="Fumarate_lyase_N"/>
</dbReference>
<dbReference type="InterPro" id="IPR008948">
    <property type="entry name" value="L-Aspartase-like"/>
</dbReference>
<dbReference type="NCBIfam" id="TIGR00838">
    <property type="entry name" value="argH"/>
    <property type="match status" value="1"/>
</dbReference>
<dbReference type="PANTHER" id="PTHR43814">
    <property type="entry name" value="ARGININOSUCCINATE LYASE"/>
    <property type="match status" value="1"/>
</dbReference>
<dbReference type="PANTHER" id="PTHR43814:SF1">
    <property type="entry name" value="ARGININOSUCCINATE LYASE"/>
    <property type="match status" value="1"/>
</dbReference>
<dbReference type="Pfam" id="PF14698">
    <property type="entry name" value="ASL_C2"/>
    <property type="match status" value="1"/>
</dbReference>
<dbReference type="Pfam" id="PF00206">
    <property type="entry name" value="Lyase_1"/>
    <property type="match status" value="1"/>
</dbReference>
<dbReference type="PRINTS" id="PR00145">
    <property type="entry name" value="ARGSUCLYASE"/>
</dbReference>
<dbReference type="PRINTS" id="PR00149">
    <property type="entry name" value="FUMRATELYASE"/>
</dbReference>
<dbReference type="SUPFAM" id="SSF48557">
    <property type="entry name" value="L-aspartase-like"/>
    <property type="match status" value="1"/>
</dbReference>
<dbReference type="PROSITE" id="PS00163">
    <property type="entry name" value="FUMARATE_LYASES"/>
    <property type="match status" value="1"/>
</dbReference>
<name>ARLY_CUPNH</name>
<reference key="1">
    <citation type="journal article" date="2006" name="Nat. Biotechnol.">
        <title>Genome sequence of the bioplastic-producing 'Knallgas' bacterium Ralstonia eutropha H16.</title>
        <authorList>
            <person name="Pohlmann A."/>
            <person name="Fricke W.F."/>
            <person name="Reinecke F."/>
            <person name="Kusian B."/>
            <person name="Liesegang H."/>
            <person name="Cramm R."/>
            <person name="Eitinger T."/>
            <person name="Ewering C."/>
            <person name="Poetter M."/>
            <person name="Schwartz E."/>
            <person name="Strittmatter A."/>
            <person name="Voss I."/>
            <person name="Gottschalk G."/>
            <person name="Steinbuechel A."/>
            <person name="Friedrich B."/>
            <person name="Bowien B."/>
        </authorList>
    </citation>
    <scope>NUCLEOTIDE SEQUENCE [LARGE SCALE GENOMIC DNA]</scope>
    <source>
        <strain>ATCC 17699 / DSM 428 / KCTC 22496 / NCIMB 10442 / H16 / Stanier 337</strain>
    </source>
</reference>
<sequence>MSTSQLAKKGEAWSARFSEPMSDLVKRYTASVFFDKRLALFDIQGSLAHAAMLAKQGIIAEADRAEIERGMAQIKAEIEAGGFEWKLDLEDVHLNIEARLTALVGDAGKRLHTGRSRNDQVATDIRLWLRSEIDNIMVLLGALRAALLDLAEQNADTILPGFTHLQVAQPVTFGHHLLAYNEMFTRDAERMADCRKRVNRLPLGAAALAGTSYPIDREFVAQQLGFDGVCRNSLDAVSDRDFAIEFCAAAALVMTHVSRFSEELVLWMSPRVGFIDIADRFCTGSSIMPQKKNPDVPELARGKTGRVNGHLIGLLTLMKGQPLAYNKDNQEDKEPLFDTVDTVVDTLRIFADMVPGITVKPEAMRAAALQGYATATDLADYLVKKGLPFRDAHEAVAHAVRACDSRQCDLADLSVAELREVSGLGDKAALIGDDVHAVLTLEGSVAARDHIGGTAPAQVRAAIAEARKTLNG</sequence>
<feature type="chain" id="PRO_1000000529" description="Argininosuccinate lyase">
    <location>
        <begin position="1"/>
        <end position="472"/>
    </location>
</feature>
<keyword id="KW-0028">Amino-acid biosynthesis</keyword>
<keyword id="KW-0055">Arginine biosynthesis</keyword>
<keyword id="KW-0963">Cytoplasm</keyword>
<keyword id="KW-0456">Lyase</keyword>
<keyword id="KW-1185">Reference proteome</keyword>
<protein>
    <recommendedName>
        <fullName evidence="1">Argininosuccinate lyase</fullName>
        <shortName evidence="1">ASAL</shortName>
        <ecNumber evidence="1">4.3.2.1</ecNumber>
    </recommendedName>
    <alternativeName>
        <fullName evidence="1">Arginosuccinase</fullName>
    </alternativeName>
</protein>
<proteinExistence type="inferred from homology"/>
<gene>
    <name evidence="1" type="primary">argH</name>
    <name type="ordered locus">H16_A2925</name>
</gene>
<comment type="catalytic activity">
    <reaction evidence="1">
        <text>2-(N(omega)-L-arginino)succinate = fumarate + L-arginine</text>
        <dbReference type="Rhea" id="RHEA:24020"/>
        <dbReference type="ChEBI" id="CHEBI:29806"/>
        <dbReference type="ChEBI" id="CHEBI:32682"/>
        <dbReference type="ChEBI" id="CHEBI:57472"/>
        <dbReference type="EC" id="4.3.2.1"/>
    </reaction>
</comment>
<comment type="pathway">
    <text evidence="1">Amino-acid biosynthesis; L-arginine biosynthesis; L-arginine from L-ornithine and carbamoyl phosphate: step 3/3.</text>
</comment>
<comment type="subcellular location">
    <subcellularLocation>
        <location evidence="1">Cytoplasm</location>
    </subcellularLocation>
</comment>
<comment type="similarity">
    <text evidence="1">Belongs to the lyase 1 family. Argininosuccinate lyase subfamily.</text>
</comment>
<organism>
    <name type="scientific">Cupriavidus necator (strain ATCC 17699 / DSM 428 / KCTC 22496 / NCIMB 10442 / H16 / Stanier 337)</name>
    <name type="common">Ralstonia eutropha</name>
    <dbReference type="NCBI Taxonomy" id="381666"/>
    <lineage>
        <taxon>Bacteria</taxon>
        <taxon>Pseudomonadati</taxon>
        <taxon>Pseudomonadota</taxon>
        <taxon>Betaproteobacteria</taxon>
        <taxon>Burkholderiales</taxon>
        <taxon>Burkholderiaceae</taxon>
        <taxon>Cupriavidus</taxon>
    </lineage>
</organism>